<reference key="1">
    <citation type="submission" date="2008-02" db="EMBL/GenBank/DDBJ databases">
        <title>Complete sequence of Pseudomonas putida W619.</title>
        <authorList>
            <person name="Copeland A."/>
            <person name="Lucas S."/>
            <person name="Lapidus A."/>
            <person name="Barry K."/>
            <person name="Detter J.C."/>
            <person name="Glavina del Rio T."/>
            <person name="Dalin E."/>
            <person name="Tice H."/>
            <person name="Pitluck S."/>
            <person name="Chain P."/>
            <person name="Malfatti S."/>
            <person name="Shin M."/>
            <person name="Vergez L."/>
            <person name="Schmutz J."/>
            <person name="Larimer F."/>
            <person name="Land M."/>
            <person name="Hauser L."/>
            <person name="Kyrpides N."/>
            <person name="Kim E."/>
            <person name="Taghavi S."/>
            <person name="Vangronsveld D."/>
            <person name="van der Lelie D."/>
            <person name="Richardson P."/>
        </authorList>
    </citation>
    <scope>NUCLEOTIDE SEQUENCE [LARGE SCALE GENOMIC DNA]</scope>
    <source>
        <strain>W619</strain>
    </source>
</reference>
<organism>
    <name type="scientific">Pseudomonas putida (strain W619)</name>
    <dbReference type="NCBI Taxonomy" id="390235"/>
    <lineage>
        <taxon>Bacteria</taxon>
        <taxon>Pseudomonadati</taxon>
        <taxon>Pseudomonadota</taxon>
        <taxon>Gammaproteobacteria</taxon>
        <taxon>Pseudomonadales</taxon>
        <taxon>Pseudomonadaceae</taxon>
        <taxon>Pseudomonas</taxon>
    </lineage>
</organism>
<accession>B1JBR2</accession>
<comment type="function">
    <text evidence="1">Modifies, by uridylylation and deuridylylation, the PII regulatory proteins (GlnB and homologs), in response to the nitrogen status of the cell that GlnD senses through the glutamine level. Under low glutamine levels, catalyzes the conversion of the PII proteins and UTP to PII-UMP and PPi, while under higher glutamine levels, GlnD hydrolyzes PII-UMP to PII and UMP (deuridylylation). Thus, controls uridylylation state and activity of the PII proteins, and plays an important role in the regulation of nitrogen assimilation and metabolism.</text>
</comment>
<comment type="catalytic activity">
    <reaction evidence="1">
        <text>[protein-PII]-L-tyrosine + UTP = [protein-PII]-uridylyl-L-tyrosine + diphosphate</text>
        <dbReference type="Rhea" id="RHEA:13673"/>
        <dbReference type="Rhea" id="RHEA-COMP:12147"/>
        <dbReference type="Rhea" id="RHEA-COMP:12148"/>
        <dbReference type="ChEBI" id="CHEBI:33019"/>
        <dbReference type="ChEBI" id="CHEBI:46398"/>
        <dbReference type="ChEBI" id="CHEBI:46858"/>
        <dbReference type="ChEBI" id="CHEBI:90602"/>
        <dbReference type="EC" id="2.7.7.59"/>
    </reaction>
</comment>
<comment type="catalytic activity">
    <reaction evidence="1">
        <text>[protein-PII]-uridylyl-L-tyrosine + H2O = [protein-PII]-L-tyrosine + UMP + H(+)</text>
        <dbReference type="Rhea" id="RHEA:48600"/>
        <dbReference type="Rhea" id="RHEA-COMP:12147"/>
        <dbReference type="Rhea" id="RHEA-COMP:12148"/>
        <dbReference type="ChEBI" id="CHEBI:15377"/>
        <dbReference type="ChEBI" id="CHEBI:15378"/>
        <dbReference type="ChEBI" id="CHEBI:46858"/>
        <dbReference type="ChEBI" id="CHEBI:57865"/>
        <dbReference type="ChEBI" id="CHEBI:90602"/>
    </reaction>
</comment>
<comment type="cofactor">
    <cofactor evidence="1">
        <name>Mg(2+)</name>
        <dbReference type="ChEBI" id="CHEBI:18420"/>
    </cofactor>
</comment>
<comment type="activity regulation">
    <text evidence="1">Uridylyltransferase (UTase) activity is inhibited by glutamine, while glutamine activates uridylyl-removing (UR) activity.</text>
</comment>
<comment type="domain">
    <text evidence="1">Has four distinct domains: an N-terminal nucleotidyltransferase (NT) domain responsible for UTase activity, a central HD domain that encodes UR activity, and two C-terminal ACT domains that seem to have a role in glutamine sensing.</text>
</comment>
<comment type="similarity">
    <text evidence="1">Belongs to the GlnD family.</text>
</comment>
<gene>
    <name evidence="1" type="primary">glnD</name>
    <name type="ordered locus">PputW619_4084</name>
</gene>
<proteinExistence type="inferred from homology"/>
<evidence type="ECO:0000255" key="1">
    <source>
        <dbReference type="HAMAP-Rule" id="MF_00277"/>
    </source>
</evidence>
<evidence type="ECO:0000255" key="2">
    <source>
        <dbReference type="PROSITE-ProRule" id="PRU01175"/>
    </source>
</evidence>
<sequence>MPQVDPELFDRGQFQAELALKASPIAAFKKAIRQAGEVLDRRFRDGRDIRRLIEDRAWLVDNILQQAWKQFDWGDADGIALVAVGGYGRGELHPHSDIDLLILLRDAEHEQYRDAIERFLTLLWDIGLEVGQSVRTVDECAEQARADLTVITNMMESRTIAGREALRQRMLEVTSTAHMWPSKEFFLAKRAELKARHHKYNDTEYNLEPNVKGSPGGLRDIQTVLWVARRQYGTLNLHALAGEGFLLESENELLASSQDFLWKVRYALHMLAGRAEDRLLFDHQRSIAALLGYSDENPKRAIEQFMQQYYRVVMSISQLCDLIIQHFEEVILADDDSGTTQPLNARFRLHDGYIEAVNANVFKRTPFAMLEIFVLMAQHPEIKGVRADTVRLLREHRHLIDDTFRNDIRNTSLFIELFKCEIGIHRNLRRMNRYGILGRYLPEFGLIVGQMQHDLFHIYTVDAHTLNLIKHLRKLQYTPVSEKFPLASKLMGRLPKPELIYLAGLYHDIGKGRQGDHSELGAVDAKKFCERHQLPAWDSRLIVWLVQNHLVMSTTAQRKDLSDPQVINDFALHVGDETRLDYLYVLTVADINATNPSLWNSWRASLLRQLYSETKRALRRGLENPLDREEQIRQTQSAALDILVREGTDPDDVEQLWSQLGDDYFLKHNAADVAWHSDAILQQPADGGPLVLIKETTQREFEGGTQIFIYAPDQHDFFAVTVAAMSQLNLNIHDARIITSSSQFTLDTYIVLDNDGGSIGDNPQRVKQIRDGLTEALRNPEDYPTIIQRRVPRQLKHFNFPPQVTILNDAQRAVTILEITAPDRPGLLARIGRIFLEFDLSLQNAKIATLGERVEDVFFITDADNQPLSDPQLCSRLQEAIVQQLQAGQASDASPTRVTF</sequence>
<name>GLND_PSEPW</name>
<keyword id="KW-0378">Hydrolase</keyword>
<keyword id="KW-0460">Magnesium</keyword>
<keyword id="KW-0511">Multifunctional enzyme</keyword>
<keyword id="KW-0548">Nucleotidyltransferase</keyword>
<keyword id="KW-0677">Repeat</keyword>
<keyword id="KW-0808">Transferase</keyword>
<feature type="chain" id="PRO_1000114758" description="Bifunctional uridylyltransferase/uridylyl-removing enzyme">
    <location>
        <begin position="1"/>
        <end position="900"/>
    </location>
</feature>
<feature type="domain" description="HD" evidence="2">
    <location>
        <begin position="461"/>
        <end position="583"/>
    </location>
</feature>
<feature type="domain" description="ACT 1" evidence="1">
    <location>
        <begin position="706"/>
        <end position="784"/>
    </location>
</feature>
<feature type="domain" description="ACT 2" evidence="1">
    <location>
        <begin position="816"/>
        <end position="900"/>
    </location>
</feature>
<feature type="region of interest" description="Uridylyltransferase">
    <location>
        <begin position="1"/>
        <end position="342"/>
    </location>
</feature>
<feature type="region of interest" description="Uridylyl-removing">
    <location>
        <begin position="343"/>
        <end position="705"/>
    </location>
</feature>
<dbReference type="EC" id="2.7.7.59" evidence="1"/>
<dbReference type="EC" id="3.1.4.-" evidence="1"/>
<dbReference type="EMBL" id="CP000949">
    <property type="protein sequence ID" value="ACA74564.1"/>
    <property type="molecule type" value="Genomic_DNA"/>
</dbReference>
<dbReference type="SMR" id="B1JBR2"/>
<dbReference type="STRING" id="390235.PputW619_4084"/>
<dbReference type="KEGG" id="ppw:PputW619_4084"/>
<dbReference type="eggNOG" id="COG2844">
    <property type="taxonomic scope" value="Bacteria"/>
</dbReference>
<dbReference type="HOGENOM" id="CLU_012833_0_0_6"/>
<dbReference type="OrthoDB" id="9758038at2"/>
<dbReference type="GO" id="GO:0008773">
    <property type="term" value="F:[protein-PII] uridylyltransferase activity"/>
    <property type="evidence" value="ECO:0007669"/>
    <property type="project" value="UniProtKB-UniRule"/>
</dbReference>
<dbReference type="GO" id="GO:0008081">
    <property type="term" value="F:phosphoric diester hydrolase activity"/>
    <property type="evidence" value="ECO:0007669"/>
    <property type="project" value="UniProtKB-UniRule"/>
</dbReference>
<dbReference type="GO" id="GO:0006808">
    <property type="term" value="P:regulation of nitrogen utilization"/>
    <property type="evidence" value="ECO:0007669"/>
    <property type="project" value="UniProtKB-UniRule"/>
</dbReference>
<dbReference type="CDD" id="cd04899">
    <property type="entry name" value="ACT_ACR-UUR-like_2"/>
    <property type="match status" value="1"/>
</dbReference>
<dbReference type="CDD" id="cd04900">
    <property type="entry name" value="ACT_UUR-like_1"/>
    <property type="match status" value="1"/>
</dbReference>
<dbReference type="CDD" id="cd00077">
    <property type="entry name" value="HDc"/>
    <property type="match status" value="1"/>
</dbReference>
<dbReference type="CDD" id="cd05401">
    <property type="entry name" value="NT_GlnE_GlnD_like"/>
    <property type="match status" value="1"/>
</dbReference>
<dbReference type="FunFam" id="1.10.3090.10:FF:000005">
    <property type="entry name" value="Bifunctional uridylyltransferase/uridylyl-removing enzyme"/>
    <property type="match status" value="1"/>
</dbReference>
<dbReference type="Gene3D" id="3.30.460.10">
    <property type="entry name" value="Beta Polymerase, domain 2"/>
    <property type="match status" value="1"/>
</dbReference>
<dbReference type="Gene3D" id="1.10.3090.10">
    <property type="entry name" value="cca-adding enzyme, domain 2"/>
    <property type="match status" value="1"/>
</dbReference>
<dbReference type="Gene3D" id="1.20.120.330">
    <property type="entry name" value="Nucleotidyltransferases domain 2"/>
    <property type="match status" value="1"/>
</dbReference>
<dbReference type="HAMAP" id="MF_00277">
    <property type="entry name" value="PII_uridylyl_transf"/>
    <property type="match status" value="1"/>
</dbReference>
<dbReference type="InterPro" id="IPR045865">
    <property type="entry name" value="ACT-like_dom_sf"/>
</dbReference>
<dbReference type="InterPro" id="IPR002912">
    <property type="entry name" value="ACT_dom"/>
</dbReference>
<dbReference type="InterPro" id="IPR003607">
    <property type="entry name" value="HD/PDEase_dom"/>
</dbReference>
<dbReference type="InterPro" id="IPR006674">
    <property type="entry name" value="HD_domain"/>
</dbReference>
<dbReference type="InterPro" id="IPR043519">
    <property type="entry name" value="NT_sf"/>
</dbReference>
<dbReference type="InterPro" id="IPR013546">
    <property type="entry name" value="PII_UdlTrfase/GS_AdlTrfase"/>
</dbReference>
<dbReference type="InterPro" id="IPR002934">
    <property type="entry name" value="Polymerase_NTP_transf_dom"/>
</dbReference>
<dbReference type="InterPro" id="IPR010043">
    <property type="entry name" value="UTase/UR"/>
</dbReference>
<dbReference type="NCBIfam" id="NF001366">
    <property type="entry name" value="PRK00275.1"/>
    <property type="match status" value="1"/>
</dbReference>
<dbReference type="NCBIfam" id="TIGR01693">
    <property type="entry name" value="UTase_glnD"/>
    <property type="match status" value="1"/>
</dbReference>
<dbReference type="PANTHER" id="PTHR47320">
    <property type="entry name" value="BIFUNCTIONAL URIDYLYLTRANSFERASE/URIDYLYL-REMOVING ENZYME"/>
    <property type="match status" value="1"/>
</dbReference>
<dbReference type="PANTHER" id="PTHR47320:SF1">
    <property type="entry name" value="BIFUNCTIONAL URIDYLYLTRANSFERASE_URIDYLYL-REMOVING ENZYME"/>
    <property type="match status" value="1"/>
</dbReference>
<dbReference type="Pfam" id="PF01842">
    <property type="entry name" value="ACT"/>
    <property type="match status" value="1"/>
</dbReference>
<dbReference type="Pfam" id="PF08335">
    <property type="entry name" value="GlnD_UR_UTase"/>
    <property type="match status" value="1"/>
</dbReference>
<dbReference type="Pfam" id="PF01966">
    <property type="entry name" value="HD"/>
    <property type="match status" value="1"/>
</dbReference>
<dbReference type="Pfam" id="PF01909">
    <property type="entry name" value="NTP_transf_2"/>
    <property type="match status" value="1"/>
</dbReference>
<dbReference type="PIRSF" id="PIRSF006288">
    <property type="entry name" value="PII_uridyltransf"/>
    <property type="match status" value="1"/>
</dbReference>
<dbReference type="SMART" id="SM00471">
    <property type="entry name" value="HDc"/>
    <property type="match status" value="1"/>
</dbReference>
<dbReference type="SUPFAM" id="SSF55021">
    <property type="entry name" value="ACT-like"/>
    <property type="match status" value="2"/>
</dbReference>
<dbReference type="SUPFAM" id="SSF109604">
    <property type="entry name" value="HD-domain/PDEase-like"/>
    <property type="match status" value="1"/>
</dbReference>
<dbReference type="SUPFAM" id="SSF81301">
    <property type="entry name" value="Nucleotidyltransferase"/>
    <property type="match status" value="1"/>
</dbReference>
<dbReference type="SUPFAM" id="SSF81593">
    <property type="entry name" value="Nucleotidyltransferase substrate binding subunit/domain"/>
    <property type="match status" value="1"/>
</dbReference>
<dbReference type="PROSITE" id="PS51671">
    <property type="entry name" value="ACT"/>
    <property type="match status" value="2"/>
</dbReference>
<dbReference type="PROSITE" id="PS51831">
    <property type="entry name" value="HD"/>
    <property type="match status" value="1"/>
</dbReference>
<protein>
    <recommendedName>
        <fullName evidence="1">Bifunctional uridylyltransferase/uridylyl-removing enzyme</fullName>
        <shortName evidence="1">UTase/UR</shortName>
    </recommendedName>
    <alternativeName>
        <fullName evidence="1">Bifunctional [protein-PII] modification enzyme</fullName>
    </alternativeName>
    <alternativeName>
        <fullName evidence="1">Bifunctional nitrogen sensor protein</fullName>
    </alternativeName>
    <domain>
        <recommendedName>
            <fullName evidence="1">[Protein-PII] uridylyltransferase</fullName>
            <shortName evidence="1">PII uridylyltransferase</shortName>
            <shortName evidence="1">UTase</shortName>
            <ecNumber evidence="1">2.7.7.59</ecNumber>
        </recommendedName>
    </domain>
    <domain>
        <recommendedName>
            <fullName evidence="1">[Protein-PII]-UMP uridylyl-removing enzyme</fullName>
            <shortName evidence="1">UR</shortName>
            <ecNumber evidence="1">3.1.4.-</ecNumber>
        </recommendedName>
    </domain>
</protein>